<organism>
    <name type="scientific">Mycolicibacterium smegmatis (strain ATCC 700084 / mc(2)155)</name>
    <name type="common">Mycobacterium smegmatis</name>
    <dbReference type="NCBI Taxonomy" id="246196"/>
    <lineage>
        <taxon>Bacteria</taxon>
        <taxon>Bacillati</taxon>
        <taxon>Actinomycetota</taxon>
        <taxon>Actinomycetes</taxon>
        <taxon>Mycobacteriales</taxon>
        <taxon>Mycobacteriaceae</taxon>
        <taxon>Mycolicibacterium</taxon>
    </lineage>
</organism>
<sequence length="399" mass="42337">MIELDRLDLGGGRRLVITSEPDAAVPQVRDADGHWRRAGPGDGVAEAMLDALNQNPGTTKHGNFTLLSWASQTARGERPITVDQTNESVIVGDAAVVKWATHLQEGPHPAPARIKALRGNGFRGMPMPWGLVTWQTADHPETLVVTVDEYLPDAVDGWTWAVALVTDAAQDRAAVPALVDAVTAVGCVVAELHAAQADTARPATAADARSWREAALETVETAATLGTSVSGELLRARREDVEAVVGTLGDLAGIPVLAGHGDLHVGQVLRAGGRYVVTDFDGNPVLPAEARVKPVPAALDVAGMAQSLAHVAIVACKYTELAPAALADVDRLARTTFVGAYTDRLETLGHRSVYDPAPLRALRLQQVLREIIYAARHLPRWMYVPDAALPALLDEGTST</sequence>
<gene>
    <name evidence="6" type="ordered locus">MSMEI_5186</name>
</gene>
<keyword id="KW-0067">ATP-binding</keyword>
<keyword id="KW-0119">Carbohydrate metabolism</keyword>
<keyword id="KW-0418">Kinase</keyword>
<keyword id="KW-0460">Magnesium</keyword>
<keyword id="KW-0479">Metal-binding</keyword>
<keyword id="KW-0547">Nucleotide-binding</keyword>
<keyword id="KW-0808">Transferase</keyword>
<feature type="chain" id="PRO_0000447644" description="Glucosamine kinase">
    <location>
        <begin position="1"/>
        <end position="399"/>
    </location>
</feature>
<feature type="short sequence motif" description="Substrate specificity determinant motif" evidence="5">
    <location>
        <begin position="366"/>
        <end position="381"/>
    </location>
</feature>
<feature type="binding site" evidence="1">
    <location>
        <position position="98"/>
    </location>
    <ligand>
        <name>ATP</name>
        <dbReference type="ChEBI" id="CHEBI:30616"/>
    </ligand>
</feature>
<feature type="binding site" evidence="1">
    <location>
        <begin position="149"/>
        <end position="151"/>
    </location>
    <ligand>
        <name>ATP</name>
        <dbReference type="ChEBI" id="CHEBI:30616"/>
    </ligand>
</feature>
<feature type="binding site" evidence="1">
    <location>
        <position position="156"/>
    </location>
    <ligand>
        <name>ATP</name>
        <dbReference type="ChEBI" id="CHEBI:30616"/>
    </ligand>
</feature>
<feature type="binding site" evidence="1">
    <location>
        <position position="262"/>
    </location>
    <ligand>
        <name>D-glucosamine</name>
        <dbReference type="ChEBI" id="CHEBI:58723"/>
    </ligand>
</feature>
<feature type="binding site" evidence="1">
    <location>
        <position position="267"/>
    </location>
    <ligand>
        <name>Mg(2+)</name>
        <dbReference type="ChEBI" id="CHEBI:18420"/>
        <label>1</label>
    </ligand>
</feature>
<feature type="binding site" evidence="1">
    <location>
        <position position="279"/>
    </location>
    <ligand>
        <name>Mg(2+)</name>
        <dbReference type="ChEBI" id="CHEBI:18420"/>
        <label>1</label>
    </ligand>
</feature>
<feature type="binding site" evidence="1">
    <location>
        <position position="279"/>
    </location>
    <ligand>
        <name>Mg(2+)</name>
        <dbReference type="ChEBI" id="CHEBI:18420"/>
        <label>2</label>
    </ligand>
</feature>
<feature type="binding site" evidence="1">
    <location>
        <position position="281"/>
    </location>
    <ligand>
        <name>Mg(2+)</name>
        <dbReference type="ChEBI" id="CHEBI:18420"/>
        <label>2</label>
    </ligand>
</feature>
<feature type="binding site" evidence="1">
    <location>
        <position position="370"/>
    </location>
    <ligand>
        <name>D-glucosamine</name>
        <dbReference type="ChEBI" id="CHEBI:58723"/>
    </ligand>
</feature>
<reference key="1">
    <citation type="journal article" date="2007" name="Genome Biol.">
        <title>Interrupted coding sequences in Mycobacterium smegmatis: authentic mutations or sequencing errors?</title>
        <authorList>
            <person name="Deshayes C."/>
            <person name="Perrodou E."/>
            <person name="Gallien S."/>
            <person name="Euphrasie D."/>
            <person name="Schaeffer C."/>
            <person name="Van-Dorsselaer A."/>
            <person name="Poch O."/>
            <person name="Lecompte O."/>
            <person name="Reyrat J.-M."/>
        </authorList>
    </citation>
    <scope>NUCLEOTIDE SEQUENCE [LARGE SCALE GENOMIC DNA]</scope>
    <source>
        <strain>ATCC 700084 / mc(2)155</strain>
    </source>
</reference>
<reference key="2">
    <citation type="journal article" date="2009" name="Genome Res.">
        <title>Ortho-proteogenomics: multiple proteomes investigation through orthology and a new MS-based protocol.</title>
        <authorList>
            <person name="Gallien S."/>
            <person name="Perrodou E."/>
            <person name="Carapito C."/>
            <person name="Deshayes C."/>
            <person name="Reyrat J.-M."/>
            <person name="Van Dorsselaer A."/>
            <person name="Poch O."/>
            <person name="Schaeffer C."/>
            <person name="Lecompte O."/>
        </authorList>
    </citation>
    <scope>NUCLEOTIDE SEQUENCE [LARGE SCALE GENOMIC DNA]</scope>
    <source>
        <strain>ATCC 700084 / mc(2)155</strain>
    </source>
</reference>
<reference key="3">
    <citation type="journal article" date="2019" name="MBio">
        <title>Molecular Fingerprints for a Novel Enzyme Family in Actinobacteria with Glucosamine Kinase Activity.</title>
        <authorList>
            <person name="Manso J.A."/>
            <person name="Nunes-Costa D."/>
            <person name="Macedo-Ribeiro S."/>
            <person name="Empadinhas N."/>
            <person name="Pereira P.J.B."/>
        </authorList>
    </citation>
    <scope>FUNCTION</scope>
    <scope>CATALYTIC ACTIVITY</scope>
    <scope>SUBSTRATE SPECIFICITY</scope>
    <scope>BIOPHYSICOCHEMICAL PROPERTIES</scope>
</reference>
<name>GLCNK_MYCS2</name>
<accession>I7FJX8</accession>
<proteinExistence type="evidence at protein level"/>
<protein>
    <recommendedName>
        <fullName evidence="4">Glucosamine kinase</fullName>
        <shortName evidence="4">GlcN kinase</shortName>
        <shortName evidence="4">GlcNK</shortName>
        <ecNumber evidence="3">2.7.1.8</ecNumber>
    </recommendedName>
</protein>
<dbReference type="EC" id="2.7.1.8" evidence="3"/>
<dbReference type="EMBL" id="CP001663">
    <property type="protein sequence ID" value="AFP41630.1"/>
    <property type="molecule type" value="Genomic_DNA"/>
</dbReference>
<dbReference type="RefSeq" id="WP_003896729.1">
    <property type="nucleotide sequence ID" value="NZ_SIJM01000014.1"/>
</dbReference>
<dbReference type="SMR" id="I7FJX8"/>
<dbReference type="PaxDb" id="246196-MSMEI_5186"/>
<dbReference type="KEGG" id="msb:LJ00_26350"/>
<dbReference type="KEGG" id="msg:MSMEI_5186"/>
<dbReference type="PATRIC" id="fig|246196.56.peg.5306"/>
<dbReference type="BRENDA" id="2.7.1.8">
    <property type="organism ID" value="3512"/>
</dbReference>
<dbReference type="Proteomes" id="UP000006158">
    <property type="component" value="Chromosome"/>
</dbReference>
<dbReference type="GO" id="GO:0005524">
    <property type="term" value="F:ATP binding"/>
    <property type="evidence" value="ECO:0007669"/>
    <property type="project" value="UniProtKB-KW"/>
</dbReference>
<dbReference type="GO" id="GO:0047931">
    <property type="term" value="F:glucosamine kinase activity"/>
    <property type="evidence" value="ECO:0007669"/>
    <property type="project" value="UniProtKB-UniRule"/>
</dbReference>
<dbReference type="GO" id="GO:0000287">
    <property type="term" value="F:magnesium ion binding"/>
    <property type="evidence" value="ECO:0007669"/>
    <property type="project" value="UniProtKB-UniRule"/>
</dbReference>
<dbReference type="GO" id="GO:0005975">
    <property type="term" value="P:carbohydrate metabolic process"/>
    <property type="evidence" value="ECO:0007669"/>
    <property type="project" value="UniProtKB-UniRule"/>
</dbReference>
<dbReference type="Gene3D" id="3.90.1200.10">
    <property type="match status" value="1"/>
</dbReference>
<dbReference type="HAMAP" id="MF_02218">
    <property type="entry name" value="GlcN_kinase"/>
    <property type="match status" value="1"/>
</dbReference>
<dbReference type="InterPro" id="IPR053634">
    <property type="entry name" value="Actino_Glucosamine_Kinase"/>
</dbReference>
<dbReference type="InterPro" id="IPR043674">
    <property type="entry name" value="GlcN_kinase"/>
</dbReference>
<dbReference type="InterPro" id="IPR011009">
    <property type="entry name" value="Kinase-like_dom_sf"/>
</dbReference>
<dbReference type="NCBIfam" id="NF041273">
    <property type="entry name" value="GlcN_kinase"/>
    <property type="match status" value="1"/>
</dbReference>
<dbReference type="SUPFAM" id="SSF56112">
    <property type="entry name" value="Protein kinase-like (PK-like)"/>
    <property type="match status" value="1"/>
</dbReference>
<evidence type="ECO:0000250" key="1">
    <source>
        <dbReference type="UniProtKB" id="A0A1H7TQR5"/>
    </source>
</evidence>
<evidence type="ECO:0000255" key="2">
    <source>
        <dbReference type="HAMAP-Rule" id="MF_02218"/>
    </source>
</evidence>
<evidence type="ECO:0000269" key="3">
    <source>
    </source>
</evidence>
<evidence type="ECO:0000303" key="4">
    <source>
    </source>
</evidence>
<evidence type="ECO:0000305" key="5">
    <source>
    </source>
</evidence>
<evidence type="ECO:0000312" key="6">
    <source>
        <dbReference type="EMBL" id="AFP41630.1"/>
    </source>
</evidence>
<comment type="function">
    <text evidence="3">Catalyzes the ATP-dependent phosphorylation of D-glucosamine (GlcN) to D-glucosamine 6-phosphate. May be involved in the phosphorylation of acquired extracellular GlcN derived from the hydrolysis of chitosan, i.e., in the incorporation of exogenous GlcN into the bacterial GlcNAc metabolism. Is unable to phosphorylate maltose.</text>
</comment>
<comment type="catalytic activity">
    <reaction evidence="3">
        <text>D-glucosamine + ATP = D-glucosamine 6-phosphate + ADP + H(+)</text>
        <dbReference type="Rhea" id="RHEA:10948"/>
        <dbReference type="ChEBI" id="CHEBI:15378"/>
        <dbReference type="ChEBI" id="CHEBI:30616"/>
        <dbReference type="ChEBI" id="CHEBI:58723"/>
        <dbReference type="ChEBI" id="CHEBI:58725"/>
        <dbReference type="ChEBI" id="CHEBI:456216"/>
        <dbReference type="EC" id="2.7.1.8"/>
    </reaction>
</comment>
<comment type="cofactor">
    <cofactor evidence="1">
        <name>Mg(2+)</name>
        <dbReference type="ChEBI" id="CHEBI:18420"/>
    </cofactor>
    <text evidence="1">Binds 2 Mg(2+) ions per subunit.</text>
</comment>
<comment type="biophysicochemical properties">
    <kinetics>
        <KM evidence="3">14 mM for D-glucosamine</KM>
    </kinetics>
</comment>
<comment type="subunit">
    <text evidence="1">Monomer.</text>
</comment>
<comment type="similarity">
    <text evidence="2 5">Belongs to the actinobacterial glucosamine kinase family.</text>
</comment>